<keyword id="KW-0963">Cytoplasm</keyword>
<keyword id="KW-0328">Glycosyltransferase</keyword>
<keyword id="KW-0660">Purine salvage</keyword>
<keyword id="KW-1185">Reference proteome</keyword>
<keyword id="KW-0808">Transferase</keyword>
<feature type="chain" id="PRO_0000149464" description="Adenine phosphoribosyltransferase">
    <location>
        <begin position="1"/>
        <end position="172"/>
    </location>
</feature>
<reference key="1">
    <citation type="journal article" date="2002" name="Proc. Natl. Acad. Sci. U.S.A.">
        <title>Genome sequence of Streptococcus mutans UA159, a cariogenic dental pathogen.</title>
        <authorList>
            <person name="Ajdic D.J."/>
            <person name="McShan W.M."/>
            <person name="McLaughlin R.E."/>
            <person name="Savic G."/>
            <person name="Chang J."/>
            <person name="Carson M.B."/>
            <person name="Primeaux C."/>
            <person name="Tian R."/>
            <person name="Kenton S."/>
            <person name="Jia H.G."/>
            <person name="Lin S.P."/>
            <person name="Qian Y."/>
            <person name="Li S."/>
            <person name="Zhu H."/>
            <person name="Najar F.Z."/>
            <person name="Lai H."/>
            <person name="White J."/>
            <person name="Roe B.A."/>
            <person name="Ferretti J.J."/>
        </authorList>
    </citation>
    <scope>NUCLEOTIDE SEQUENCE [LARGE SCALE GENOMIC DNA]</scope>
    <source>
        <strain>ATCC 700610 / UA159</strain>
    </source>
</reference>
<name>APT_STRMU</name>
<evidence type="ECO:0000255" key="1">
    <source>
        <dbReference type="HAMAP-Rule" id="MF_00004"/>
    </source>
</evidence>
<accession>Q8DT95</accession>
<organism>
    <name type="scientific">Streptococcus mutans serotype c (strain ATCC 700610 / UA159)</name>
    <dbReference type="NCBI Taxonomy" id="210007"/>
    <lineage>
        <taxon>Bacteria</taxon>
        <taxon>Bacillati</taxon>
        <taxon>Bacillota</taxon>
        <taxon>Bacilli</taxon>
        <taxon>Lactobacillales</taxon>
        <taxon>Streptococcaceae</taxon>
        <taxon>Streptococcus</taxon>
    </lineage>
</organism>
<sequence length="172" mass="18785">MDLKNYIATIEDYPQEGVTFRDISPLMANGNAYSYAIREIVQYATDKKIDMIVGPEARGFIVGCPVAYELGVGFAPVRKPGKLPREVIEAHYEKEYGIDTLTMHADAIKPGQRVLIVDDLLATGGTVKATIEMIERLGGIVAGCAFLIELDGLDGRQAIEGYDTKVLMNFPG</sequence>
<comment type="function">
    <text evidence="1">Catalyzes a salvage reaction resulting in the formation of AMP, that is energically less costly than de novo synthesis.</text>
</comment>
<comment type="catalytic activity">
    <reaction evidence="1">
        <text>AMP + diphosphate = 5-phospho-alpha-D-ribose 1-diphosphate + adenine</text>
        <dbReference type="Rhea" id="RHEA:16609"/>
        <dbReference type="ChEBI" id="CHEBI:16708"/>
        <dbReference type="ChEBI" id="CHEBI:33019"/>
        <dbReference type="ChEBI" id="CHEBI:58017"/>
        <dbReference type="ChEBI" id="CHEBI:456215"/>
        <dbReference type="EC" id="2.4.2.7"/>
    </reaction>
</comment>
<comment type="pathway">
    <text evidence="1">Purine metabolism; AMP biosynthesis via salvage pathway; AMP from adenine: step 1/1.</text>
</comment>
<comment type="subunit">
    <text evidence="1">Homodimer.</text>
</comment>
<comment type="subcellular location">
    <subcellularLocation>
        <location evidence="1">Cytoplasm</location>
    </subcellularLocation>
</comment>
<comment type="similarity">
    <text evidence="1">Belongs to the purine/pyrimidine phosphoribosyltransferase family.</text>
</comment>
<proteinExistence type="inferred from homology"/>
<dbReference type="EC" id="2.4.2.7" evidence="1"/>
<dbReference type="EMBL" id="AE014133">
    <property type="protein sequence ID" value="AAN59125.1"/>
    <property type="molecule type" value="Genomic_DNA"/>
</dbReference>
<dbReference type="RefSeq" id="NP_721819.1">
    <property type="nucleotide sequence ID" value="NC_004350.2"/>
</dbReference>
<dbReference type="RefSeq" id="WP_002263078.1">
    <property type="nucleotide sequence ID" value="NC_004350.2"/>
</dbReference>
<dbReference type="SMR" id="Q8DT95"/>
<dbReference type="STRING" id="210007.SMU_1467"/>
<dbReference type="KEGG" id="smu:SMU_1467"/>
<dbReference type="PATRIC" id="fig|210007.7.peg.1305"/>
<dbReference type="eggNOG" id="COG0503">
    <property type="taxonomic scope" value="Bacteria"/>
</dbReference>
<dbReference type="HOGENOM" id="CLU_063339_3_0_9"/>
<dbReference type="OrthoDB" id="9803963at2"/>
<dbReference type="PhylomeDB" id="Q8DT95"/>
<dbReference type="UniPathway" id="UPA00588">
    <property type="reaction ID" value="UER00646"/>
</dbReference>
<dbReference type="Proteomes" id="UP000002512">
    <property type="component" value="Chromosome"/>
</dbReference>
<dbReference type="GO" id="GO:0005737">
    <property type="term" value="C:cytoplasm"/>
    <property type="evidence" value="ECO:0007669"/>
    <property type="project" value="UniProtKB-SubCell"/>
</dbReference>
<dbReference type="GO" id="GO:0002055">
    <property type="term" value="F:adenine binding"/>
    <property type="evidence" value="ECO:0007669"/>
    <property type="project" value="TreeGrafter"/>
</dbReference>
<dbReference type="GO" id="GO:0003999">
    <property type="term" value="F:adenine phosphoribosyltransferase activity"/>
    <property type="evidence" value="ECO:0007669"/>
    <property type="project" value="UniProtKB-UniRule"/>
</dbReference>
<dbReference type="GO" id="GO:0016208">
    <property type="term" value="F:AMP binding"/>
    <property type="evidence" value="ECO:0007669"/>
    <property type="project" value="TreeGrafter"/>
</dbReference>
<dbReference type="GO" id="GO:0006168">
    <property type="term" value="P:adenine salvage"/>
    <property type="evidence" value="ECO:0007669"/>
    <property type="project" value="InterPro"/>
</dbReference>
<dbReference type="GO" id="GO:0044209">
    <property type="term" value="P:AMP salvage"/>
    <property type="evidence" value="ECO:0007669"/>
    <property type="project" value="UniProtKB-UniRule"/>
</dbReference>
<dbReference type="GO" id="GO:0006166">
    <property type="term" value="P:purine ribonucleoside salvage"/>
    <property type="evidence" value="ECO:0007669"/>
    <property type="project" value="UniProtKB-KW"/>
</dbReference>
<dbReference type="CDD" id="cd06223">
    <property type="entry name" value="PRTases_typeI"/>
    <property type="match status" value="1"/>
</dbReference>
<dbReference type="FunFam" id="3.40.50.2020:FF:000004">
    <property type="entry name" value="Adenine phosphoribosyltransferase"/>
    <property type="match status" value="1"/>
</dbReference>
<dbReference type="Gene3D" id="3.40.50.2020">
    <property type="match status" value="1"/>
</dbReference>
<dbReference type="HAMAP" id="MF_00004">
    <property type="entry name" value="Aden_phosphoribosyltr"/>
    <property type="match status" value="1"/>
</dbReference>
<dbReference type="InterPro" id="IPR005764">
    <property type="entry name" value="Ade_phspho_trans"/>
</dbReference>
<dbReference type="InterPro" id="IPR000836">
    <property type="entry name" value="PRibTrfase_dom"/>
</dbReference>
<dbReference type="InterPro" id="IPR029057">
    <property type="entry name" value="PRTase-like"/>
</dbReference>
<dbReference type="InterPro" id="IPR050054">
    <property type="entry name" value="UPRTase/APRTase"/>
</dbReference>
<dbReference type="NCBIfam" id="TIGR01090">
    <property type="entry name" value="apt"/>
    <property type="match status" value="1"/>
</dbReference>
<dbReference type="NCBIfam" id="NF002633">
    <property type="entry name" value="PRK02304.1-2"/>
    <property type="match status" value="1"/>
</dbReference>
<dbReference type="NCBIfam" id="NF002634">
    <property type="entry name" value="PRK02304.1-3"/>
    <property type="match status" value="1"/>
</dbReference>
<dbReference type="NCBIfam" id="NF002636">
    <property type="entry name" value="PRK02304.1-5"/>
    <property type="match status" value="1"/>
</dbReference>
<dbReference type="PANTHER" id="PTHR32315">
    <property type="entry name" value="ADENINE PHOSPHORIBOSYLTRANSFERASE"/>
    <property type="match status" value="1"/>
</dbReference>
<dbReference type="PANTHER" id="PTHR32315:SF3">
    <property type="entry name" value="ADENINE PHOSPHORIBOSYLTRANSFERASE"/>
    <property type="match status" value="1"/>
</dbReference>
<dbReference type="Pfam" id="PF00156">
    <property type="entry name" value="Pribosyltran"/>
    <property type="match status" value="1"/>
</dbReference>
<dbReference type="SUPFAM" id="SSF53271">
    <property type="entry name" value="PRTase-like"/>
    <property type="match status" value="1"/>
</dbReference>
<dbReference type="PROSITE" id="PS00103">
    <property type="entry name" value="PUR_PYR_PR_TRANSFER"/>
    <property type="match status" value="1"/>
</dbReference>
<protein>
    <recommendedName>
        <fullName evidence="1">Adenine phosphoribosyltransferase</fullName>
        <shortName evidence="1">APRT</shortName>
        <ecNumber evidence="1">2.4.2.7</ecNumber>
    </recommendedName>
</protein>
<gene>
    <name evidence="1" type="primary">apt</name>
    <name type="ordered locus">SMU_1467</name>
</gene>